<organism evidence="6">
    <name type="scientific">Caenorhabditis elegans</name>
    <dbReference type="NCBI Taxonomy" id="6239"/>
    <lineage>
        <taxon>Eukaryota</taxon>
        <taxon>Metazoa</taxon>
        <taxon>Ecdysozoa</taxon>
        <taxon>Nematoda</taxon>
        <taxon>Chromadorea</taxon>
        <taxon>Rhabditida</taxon>
        <taxon>Rhabditina</taxon>
        <taxon>Rhabditomorpha</taxon>
        <taxon>Rhabditoidea</taxon>
        <taxon>Rhabditidae</taxon>
        <taxon>Peloderinae</taxon>
        <taxon>Caenorhabditis</taxon>
    </lineage>
</organism>
<feature type="chain" id="PRO_0000453578" description="FLYWCH transcription factor 2">
    <location>
        <begin position="1"/>
        <end position="470"/>
    </location>
</feature>
<feature type="zinc finger region" description="FLYWCH-type" evidence="1">
    <location>
        <begin position="145"/>
        <end position="204"/>
    </location>
</feature>
<feature type="region of interest" description="Disordered" evidence="2">
    <location>
        <begin position="102"/>
        <end position="148"/>
    </location>
</feature>
<feature type="compositionally biased region" description="Low complexity" evidence="2">
    <location>
        <begin position="111"/>
        <end position="140"/>
    </location>
</feature>
<gene>
    <name evidence="7" type="primary">flh-2</name>
    <name evidence="7" type="ORF">C26E6.2</name>
</gene>
<proteinExistence type="evidence at protein level"/>
<evidence type="ECO:0000255" key="1"/>
<evidence type="ECO:0000256" key="2">
    <source>
        <dbReference type="SAM" id="MobiDB-lite"/>
    </source>
</evidence>
<evidence type="ECO:0000269" key="3">
    <source>
    </source>
</evidence>
<evidence type="ECO:0000303" key="4">
    <source>
    </source>
</evidence>
<evidence type="ECO:0000305" key="5"/>
<evidence type="ECO:0000312" key="6">
    <source>
        <dbReference type="Proteomes" id="UP000001940"/>
    </source>
</evidence>
<evidence type="ECO:0000312" key="7">
    <source>
        <dbReference type="WormBase" id="C26E6.2"/>
    </source>
</evidence>
<reference evidence="6" key="1">
    <citation type="journal article" date="1998" name="Science">
        <title>Genome sequence of the nematode C. elegans: a platform for investigating biology.</title>
        <authorList>
            <consortium name="The C. elegans sequencing consortium"/>
        </authorList>
    </citation>
    <scope>NUCLEOTIDE SEQUENCE [LARGE SCALE GENOMIC DNA]</scope>
    <source>
        <strain evidence="6">Bristol N2</strain>
    </source>
</reference>
<reference evidence="5" key="2">
    <citation type="journal article" date="2008" name="Genes Dev.">
        <title>The FLYWCH transcription factors FLH-1, FLH-2, and FLH-3 repress embryonic expression of microRNA genes in C. elegans.</title>
        <authorList>
            <person name="Ow M.C."/>
            <person name="Martinez N.J."/>
            <person name="Olsen P.H."/>
            <person name="Silverman H.S."/>
            <person name="Barrasa M.I."/>
            <person name="Conradt B."/>
            <person name="Walhout A.J."/>
            <person name="Ambros V."/>
        </authorList>
    </citation>
    <scope>FUNCTION</scope>
    <scope>DEVELOPMENTAL STAGE</scope>
    <scope>DISRUPTION PHENOTYPE</scope>
</reference>
<dbReference type="EMBL" id="BX284603">
    <property type="protein sequence ID" value="CCD65726.1"/>
    <property type="molecule type" value="Genomic_DNA"/>
</dbReference>
<dbReference type="PIR" id="G88445">
    <property type="entry name" value="G88445"/>
</dbReference>
<dbReference type="RefSeq" id="NP_498049.2">
    <property type="nucleotide sequence ID" value="NM_065648.5"/>
</dbReference>
<dbReference type="FunCoup" id="Q18225">
    <property type="interactions" value="1389"/>
</dbReference>
<dbReference type="IntAct" id="Q18225">
    <property type="interactions" value="52"/>
</dbReference>
<dbReference type="STRING" id="6239.C26E6.2.1"/>
<dbReference type="PaxDb" id="6239-C26E6.2"/>
<dbReference type="PeptideAtlas" id="Q18225"/>
<dbReference type="EnsemblMetazoa" id="C26E6.2.1">
    <property type="protein sequence ID" value="C26E6.2.1"/>
    <property type="gene ID" value="WBGene00016138"/>
</dbReference>
<dbReference type="GeneID" id="175670"/>
<dbReference type="KEGG" id="cel:CELE_C26E6.2"/>
<dbReference type="AGR" id="WB:WBGene00016138"/>
<dbReference type="CTD" id="175670"/>
<dbReference type="WormBase" id="C26E6.2">
    <property type="protein sequence ID" value="CE32143"/>
    <property type="gene ID" value="WBGene00016138"/>
    <property type="gene designation" value="flh-2"/>
</dbReference>
<dbReference type="eggNOG" id="ENOG502TGK7">
    <property type="taxonomic scope" value="Eukaryota"/>
</dbReference>
<dbReference type="GeneTree" id="ENSGT00970000196226"/>
<dbReference type="HOGENOM" id="CLU_567706_0_0_1"/>
<dbReference type="InParanoid" id="Q18225"/>
<dbReference type="OMA" id="HPVKSIN"/>
<dbReference type="OrthoDB" id="5806173at2759"/>
<dbReference type="PhylomeDB" id="Q18225"/>
<dbReference type="PRO" id="PR:Q18225"/>
<dbReference type="Proteomes" id="UP000001940">
    <property type="component" value="Chromosome III"/>
</dbReference>
<dbReference type="Bgee" id="WBGene00016138">
    <property type="expression patterns" value="Expressed in pharyngeal muscle cell (C elegans) and 4 other cell types or tissues"/>
</dbReference>
<dbReference type="GO" id="GO:0005634">
    <property type="term" value="C:nucleus"/>
    <property type="evidence" value="ECO:0007005"/>
    <property type="project" value="WormBase"/>
</dbReference>
<dbReference type="GO" id="GO:0003700">
    <property type="term" value="F:DNA-binding transcription factor activity"/>
    <property type="evidence" value="ECO:0000318"/>
    <property type="project" value="GO_Central"/>
</dbReference>
<dbReference type="GO" id="GO:0043565">
    <property type="term" value="F:sequence-specific DNA binding"/>
    <property type="evidence" value="ECO:0000314"/>
    <property type="project" value="WormBase"/>
</dbReference>
<dbReference type="GO" id="GO:0008270">
    <property type="term" value="F:zinc ion binding"/>
    <property type="evidence" value="ECO:0007669"/>
    <property type="project" value="UniProtKB-KW"/>
</dbReference>
<dbReference type="GO" id="GO:0045892">
    <property type="term" value="P:negative regulation of DNA-templated transcription"/>
    <property type="evidence" value="ECO:0000316"/>
    <property type="project" value="WormBase"/>
</dbReference>
<dbReference type="GO" id="GO:0002119">
    <property type="term" value="P:nematode larval development"/>
    <property type="evidence" value="ECO:0000316"/>
    <property type="project" value="WormBase"/>
</dbReference>
<dbReference type="FunFam" id="2.20.25.240:FF:000002">
    <property type="entry name" value="FLYWCH zinc finger transcription factor homolog"/>
    <property type="match status" value="1"/>
</dbReference>
<dbReference type="Gene3D" id="2.20.25.240">
    <property type="match status" value="1"/>
</dbReference>
<dbReference type="InterPro" id="IPR052887">
    <property type="entry name" value="FLYWCH-type_ZF"/>
</dbReference>
<dbReference type="InterPro" id="IPR007588">
    <property type="entry name" value="Znf_FLYWCH"/>
</dbReference>
<dbReference type="PANTHER" id="PTHR37975:SF4">
    <property type="entry name" value="FLYWCH TRANSCRIPTION FACTOR 2"/>
    <property type="match status" value="1"/>
</dbReference>
<dbReference type="PANTHER" id="PTHR37975">
    <property type="entry name" value="FLYWCH ZINC FINGER TRANSCRIPTION FACTOR HOMOLOG"/>
    <property type="match status" value="1"/>
</dbReference>
<dbReference type="Pfam" id="PF04500">
    <property type="entry name" value="FLYWCH"/>
    <property type="match status" value="1"/>
</dbReference>
<keyword id="KW-0479">Metal-binding</keyword>
<keyword id="KW-1185">Reference proteome</keyword>
<keyword id="KW-0862">Zinc</keyword>
<keyword id="KW-0863">Zinc-finger</keyword>
<protein>
    <recommendedName>
        <fullName evidence="4">FLYWCH transcription factor 2</fullName>
    </recommendedName>
</protein>
<name>FLH2_CAEEL</name>
<sequence length="470" mass="52068">MVDTMMNTNTDGVTAVPPIFPLPSTTPNRNNNNELAMLAQKQIVAGLLLQQPTIVQAAVNGTNSQKHLADIDYTNVIQTLQALGTTNLKAFSLLLDPQSQTSQLISEDTRPSASSSPSSTATAVSNSGQSNATSTSSSSTEPEYKPRNVREKVYADGYIMSFDKKSCCGTKEFWRCERKNDCNARMHSDINTREIVRKLHPHNHEKPSPEELAFYEQDFSTLHPNYCHPVKSINRSYMQRKLSRASHVSQALPIAPQQIKAEPMEVDTTNQTIQNFQQNNNLMLLASINAAATAAAAATSAGISPPVVGQKRVSTTVMPITLKSQRTTPKEEEDSSQLMSQEEFRITYELTKKLMEMMKPKTEIGVRWQGDEGSILLFLSHDNGAEENVFFPVVVMNRDEKSLITALEGFTGKRCEGKLALCYSQRVNVLVHEALISNWTHGKLFLVNTDAPALWRLTPVDAFGEPLNHV</sequence>
<accession>Q18225</accession>
<comment type="function">
    <text evidence="3">Probable transcription factor (PubMed:18794349). May bind to the promoters of target genes, including micro-RNA genes, in order to repress expression, and acting redundantly with flh-1 and flh-3 (PubMed:18794349).</text>
</comment>
<comment type="developmental stage">
    <text evidence="3">Expressed in the embryo (at protein level) (PubMed:18794349). Expressed in most embryonic cells starting at gastrulation and also in head and tail cells during the larval and adult stages (PubMed:18794349).</text>
</comment>
<comment type="disruption phenotype">
    <text evidence="3">Knockout causes a nearly wild-type phenotype, but a few young larvae have morphological abnormalities (PubMed:18794349). In a flh-1 mutant background, L1 larvae have severe morphological abnormalities and/or appear necrotic, and 100% die before reaching the L2 larval stage (PubMed:18794349). Embryos exhibit significantly lower expression of lin-14, and overexpression of micro-RNAs, including lin-4, mir-48, mir-241, and mir-34 (PubMed:18794349). In a flh-3 mutant background, embryos exhibit significant overexpression of micro-RNAs, including lin-4, mir-48, mir-230, and mir-65 (PubMed:18794349). RNAi-mediated knockdown has no obvious phenotype, but causes precocious embryonic expression of micro-RNA lin-4, when combined with simultaneous RNAi-mediated knockdown of flh-1 (PubMed:18794349).</text>
</comment>